<accession>C8ZC45</accession>
<sequence length="246" mass="28251">MSKDKDIKVTPGTCELVEQILALLSRYLSSYIHVLNKFISHLRRVATLRFERTTLIKFVKKLRFYNDCVLSYNASEFINEGKNELDPEADSFDKVILPIASMFVKCVETFDLLNYYLTQSLQKEILSKTLNEDLTLTAESILAIDDTYNHFVKFSQWMIESLRIGSNLLDLEVVQFAIKCADEDGTNIGETDNIFLQEILPVNSEEEFQTLSAAWHSILDGKLSALDEEFDVVATKWHDKFGKLKN</sequence>
<name>SHE2_YEAS8</name>
<organism>
    <name type="scientific">Saccharomyces cerevisiae (strain Lalvin EC1118 / Prise de mousse)</name>
    <name type="common">Baker's yeast</name>
    <dbReference type="NCBI Taxonomy" id="643680"/>
    <lineage>
        <taxon>Eukaryota</taxon>
        <taxon>Fungi</taxon>
        <taxon>Dikarya</taxon>
        <taxon>Ascomycota</taxon>
        <taxon>Saccharomycotina</taxon>
        <taxon>Saccharomycetes</taxon>
        <taxon>Saccharomycetales</taxon>
        <taxon>Saccharomycetaceae</taxon>
        <taxon>Saccharomyces</taxon>
    </lineage>
</organism>
<reference key="1">
    <citation type="journal article" date="2009" name="Proc. Natl. Acad. Sci. U.S.A.">
        <title>Eukaryote-to-eukaryote gene transfer events revealed by the genome sequence of the wine yeast Saccharomyces cerevisiae EC1118.</title>
        <authorList>
            <person name="Novo M."/>
            <person name="Bigey F."/>
            <person name="Beyne E."/>
            <person name="Galeote V."/>
            <person name="Gavory F."/>
            <person name="Mallet S."/>
            <person name="Cambon B."/>
            <person name="Legras J.-L."/>
            <person name="Wincker P."/>
            <person name="Casaregola S."/>
            <person name="Dequin S."/>
        </authorList>
    </citation>
    <scope>NUCLEOTIDE SEQUENCE [LARGE SCALE GENOMIC DNA]</scope>
    <source>
        <strain>Lalvin EC1118 / Prise de mousse</strain>
    </source>
</reference>
<keyword id="KW-0963">Cytoplasm</keyword>
<keyword id="KW-0509">mRNA transport</keyword>
<keyword id="KW-0539">Nucleus</keyword>
<keyword id="KW-0694">RNA-binding</keyword>
<keyword id="KW-0813">Transport</keyword>
<protein>
    <recommendedName>
        <fullName>SWI5-dependent HO expression protein 2</fullName>
    </recommendedName>
</protein>
<gene>
    <name type="primary">SHE2</name>
    <name type="ORF">EC1118_1K5_1024g</name>
</gene>
<dbReference type="EMBL" id="FN393077">
    <property type="protein sequence ID" value="CAY80961.1"/>
    <property type="molecule type" value="Genomic_DNA"/>
</dbReference>
<dbReference type="SMR" id="C8ZC45"/>
<dbReference type="HOGENOM" id="CLU_1129832_0_0_1"/>
<dbReference type="OrthoDB" id="13575at4893"/>
<dbReference type="Proteomes" id="UP000000286">
    <property type="component" value="Chromosome XI, Scaffold EC1118_1K5"/>
</dbReference>
<dbReference type="GO" id="GO:0005737">
    <property type="term" value="C:cytoplasm"/>
    <property type="evidence" value="ECO:0007669"/>
    <property type="project" value="UniProtKB-SubCell"/>
</dbReference>
<dbReference type="GO" id="GO:0005634">
    <property type="term" value="C:nucleus"/>
    <property type="evidence" value="ECO:0007669"/>
    <property type="project" value="UniProtKB-SubCell"/>
</dbReference>
<dbReference type="GO" id="GO:0003723">
    <property type="term" value="F:RNA binding"/>
    <property type="evidence" value="ECO:0007669"/>
    <property type="project" value="UniProtKB-KW"/>
</dbReference>
<dbReference type="GO" id="GO:0051028">
    <property type="term" value="P:mRNA transport"/>
    <property type="evidence" value="ECO:0007669"/>
    <property type="project" value="UniProtKB-KW"/>
</dbReference>
<dbReference type="FunFam" id="1.20.200.20:FF:000001">
    <property type="entry name" value="SWI5-dependent HO expression protein 2"/>
    <property type="match status" value="1"/>
</dbReference>
<dbReference type="Gene3D" id="1.20.200.20">
    <property type="entry name" value="She2 domain"/>
    <property type="match status" value="1"/>
</dbReference>
<dbReference type="InterPro" id="IPR024261">
    <property type="entry name" value="RNA-bd_She2"/>
</dbReference>
<dbReference type="InterPro" id="IPR036827">
    <property type="entry name" value="She2_dom_sf"/>
</dbReference>
<dbReference type="Pfam" id="PF11435">
    <property type="entry name" value="She2p"/>
    <property type="match status" value="1"/>
</dbReference>
<dbReference type="SUPFAM" id="SSF116942">
    <property type="entry name" value="RNA-binding protein She2p"/>
    <property type="match status" value="1"/>
</dbReference>
<evidence type="ECO:0000250" key="1"/>
<evidence type="ECO:0000250" key="2">
    <source>
        <dbReference type="UniProtKB" id="P36068"/>
    </source>
</evidence>
<evidence type="ECO:0000305" key="3"/>
<proteinExistence type="inferred from homology"/>
<comment type="function">
    <text evidence="1">RNA-binding protein that binds specific mRNAs including the ASH1 mRNA, coding for a repressor of the HO endonuclease. Part of the mRNA localization machinery that restricts accumulation of certain proteins to the bud and in the daughter cell. Recruits the MYO4-SHE3 complex to the ASH1 mRNA. Also recruits LOC1 and PUF6 to ASH1 mRNA, which are required for translational repression of this mRNA (By similarity).</text>
</comment>
<comment type="subunit">
    <text evidence="1">Homodimer and homotetramer. Interacts with LOC1, MYO4, PUF6, SHE3 and with RNA pol II subunits RPO21, SPT4 and SPT5.</text>
</comment>
<comment type="subcellular location">
    <subcellularLocation>
        <location evidence="2">Cytoplasm</location>
    </subcellularLocation>
    <subcellularLocation>
        <location evidence="2">Nucleus</location>
    </subcellularLocation>
    <text evidence="2">Shuttles between the nucleus and cytoplasm and is exported in an mRNA-dependent manner. The presence in the nucleus is essential for PUF6 and LOC1 to bind the ASH1 mRNA.</text>
</comment>
<comment type="similarity">
    <text evidence="3">Belongs to the SHE2 family.</text>
</comment>
<feature type="chain" id="PRO_0000408925" description="SWI5-dependent HO expression protein 2">
    <location>
        <begin position="1"/>
        <end position="246"/>
    </location>
</feature>
<feature type="short sequence motif" description="Nuclear localization signal" evidence="1">
    <location>
        <begin position="15"/>
        <end position="23"/>
    </location>
</feature>